<protein>
    <recommendedName>
        <fullName>Muscarinic m1-toxin2</fullName>
    </recommendedName>
</protein>
<reference key="1">
    <citation type="journal article" date="2000" name="Toxicon">
        <title>M1-toxin isotoxins from the green mamba (Dendroaspis angusticeps) that selectively block m1 muscarinic receptors.</title>
        <authorList>
            <person name="Carsi J.M."/>
            <person name="Potter L.T."/>
        </authorList>
    </citation>
    <scope>PROTEIN SEQUENCE</scope>
    <scope>FUNCTION</scope>
    <scope>SUBCELLULAR LOCATION</scope>
    <source>
        <tissue>Venom</tissue>
    </source>
</reference>
<keyword id="KW-0903">Direct protein sequencing</keyword>
<keyword id="KW-1015">Disulfide bond</keyword>
<keyword id="KW-1214">G-protein coupled acetylcholine receptor impairing toxin</keyword>
<keyword id="KW-1213">G-protein coupled receptor impairing toxin</keyword>
<keyword id="KW-0528">Neurotoxin</keyword>
<keyword id="KW-0629">Postsynaptic neurotoxin</keyword>
<keyword id="KW-0964">Secreted</keyword>
<keyword id="KW-0800">Toxin</keyword>
<feature type="chain" id="PRO_0000093644" description="Muscarinic m1-toxin2" evidence="2">
    <location>
        <begin position="1"/>
        <end position="65"/>
    </location>
</feature>
<feature type="disulfide bond" evidence="1">
    <location>
        <begin position="3"/>
        <end position="24"/>
    </location>
</feature>
<feature type="disulfide bond" evidence="1">
    <location>
        <begin position="17"/>
        <end position="42"/>
    </location>
</feature>
<feature type="disulfide bond" evidence="1">
    <location>
        <begin position="46"/>
        <end position="57"/>
    </location>
</feature>
<feature type="disulfide bond" evidence="1">
    <location>
        <begin position="58"/>
        <end position="63"/>
    </location>
</feature>
<proteinExistence type="evidence at protein level"/>
<dbReference type="SMR" id="P60234"/>
<dbReference type="GO" id="GO:0005576">
    <property type="term" value="C:extracellular region"/>
    <property type="evidence" value="ECO:0007669"/>
    <property type="project" value="UniProtKB-SubCell"/>
</dbReference>
<dbReference type="GO" id="GO:0090729">
    <property type="term" value="F:toxin activity"/>
    <property type="evidence" value="ECO:0007669"/>
    <property type="project" value="UniProtKB-KW"/>
</dbReference>
<dbReference type="CDD" id="cd00206">
    <property type="entry name" value="TFP_snake_toxin"/>
    <property type="match status" value="1"/>
</dbReference>
<dbReference type="FunFam" id="2.10.60.10:FF:000024">
    <property type="entry name" value="Cytotoxin 1"/>
    <property type="match status" value="1"/>
</dbReference>
<dbReference type="Gene3D" id="2.10.60.10">
    <property type="entry name" value="CD59"/>
    <property type="match status" value="1"/>
</dbReference>
<dbReference type="InterPro" id="IPR003571">
    <property type="entry name" value="Snake_3FTx"/>
</dbReference>
<dbReference type="InterPro" id="IPR045860">
    <property type="entry name" value="Snake_toxin-like_sf"/>
</dbReference>
<dbReference type="InterPro" id="IPR018354">
    <property type="entry name" value="Snake_toxin_con_site"/>
</dbReference>
<dbReference type="InterPro" id="IPR054131">
    <property type="entry name" value="Toxin_cobra-type"/>
</dbReference>
<dbReference type="Pfam" id="PF21947">
    <property type="entry name" value="Toxin_cobra-type"/>
    <property type="match status" value="1"/>
</dbReference>
<dbReference type="SUPFAM" id="SSF57302">
    <property type="entry name" value="Snake toxin-like"/>
    <property type="match status" value="1"/>
</dbReference>
<dbReference type="PROSITE" id="PS00272">
    <property type="entry name" value="SNAKE_TOXIN"/>
    <property type="match status" value="1"/>
</dbReference>
<accession>P60234</accession>
<name>3SI12_DENAN</name>
<organism>
    <name type="scientific">Dendroaspis angusticeps</name>
    <name type="common">Eastern green mamba</name>
    <name type="synonym">Naja angusticeps</name>
    <dbReference type="NCBI Taxonomy" id="8618"/>
    <lineage>
        <taxon>Eukaryota</taxon>
        <taxon>Metazoa</taxon>
        <taxon>Chordata</taxon>
        <taxon>Craniata</taxon>
        <taxon>Vertebrata</taxon>
        <taxon>Euteleostomi</taxon>
        <taxon>Lepidosauria</taxon>
        <taxon>Squamata</taxon>
        <taxon>Bifurcata</taxon>
        <taxon>Unidentata</taxon>
        <taxon>Episquamata</taxon>
        <taxon>Toxicofera</taxon>
        <taxon>Serpentes</taxon>
        <taxon>Colubroidea</taxon>
        <taxon>Elapidae</taxon>
        <taxon>Elapinae</taxon>
        <taxon>Dendroaspis</taxon>
    </lineage>
</organism>
<comment type="function">
    <text evidence="2">Binds irreversibly and specifically to M1 (CHRM1) muscarinic acetylcholine receptors, blocking further binding of antagonists and preventing the action of agonists.</text>
</comment>
<comment type="subunit">
    <text>Monomer.</text>
</comment>
<comment type="subcellular location">
    <subcellularLocation>
        <location evidence="2">Secreted</location>
    </subcellularLocation>
</comment>
<comment type="tissue specificity">
    <text evidence="3">Expressed by the venom gland.</text>
</comment>
<comment type="miscellaneous">
    <text evidence="3">Is classified as a P-type cytotoxin, since a proline residue stands at position 33 (Pro-31 in standard classification).</text>
</comment>
<comment type="similarity">
    <text evidence="3">Belongs to the three-finger toxin family. Short-chain subfamily. Aminergic toxin sub-subfamily.</text>
</comment>
<evidence type="ECO:0000250" key="1">
    <source>
        <dbReference type="UniProtKB" id="P60301"/>
    </source>
</evidence>
<evidence type="ECO:0000269" key="2">
    <source>
    </source>
</evidence>
<evidence type="ECO:0000305" key="3"/>
<sequence>LTCVKSNSIWFPTSEDCPPGQNLCFKRWQYISPRMYDFTRGCAATCPKAEYRDVINCCGTDKCNK</sequence>